<evidence type="ECO:0000255" key="1">
    <source>
        <dbReference type="HAMAP-Rule" id="MF_00361"/>
    </source>
</evidence>
<feature type="chain" id="PRO_1000005412" description="NAD kinase">
    <location>
        <begin position="1"/>
        <end position="296"/>
    </location>
</feature>
<feature type="active site" description="Proton acceptor" evidence="1">
    <location>
        <position position="72"/>
    </location>
</feature>
<feature type="binding site" evidence="1">
    <location>
        <begin position="72"/>
        <end position="73"/>
    </location>
    <ligand>
        <name>NAD(+)</name>
        <dbReference type="ChEBI" id="CHEBI:57540"/>
    </ligand>
</feature>
<feature type="binding site" evidence="1">
    <location>
        <begin position="146"/>
        <end position="147"/>
    </location>
    <ligand>
        <name>NAD(+)</name>
        <dbReference type="ChEBI" id="CHEBI:57540"/>
    </ligand>
</feature>
<feature type="binding site" evidence="1">
    <location>
        <position position="157"/>
    </location>
    <ligand>
        <name>NAD(+)</name>
        <dbReference type="ChEBI" id="CHEBI:57540"/>
    </ligand>
</feature>
<feature type="binding site" evidence="1">
    <location>
        <position position="174"/>
    </location>
    <ligand>
        <name>NAD(+)</name>
        <dbReference type="ChEBI" id="CHEBI:57540"/>
    </ligand>
</feature>
<feature type="binding site" evidence="1">
    <location>
        <position position="176"/>
    </location>
    <ligand>
        <name>NAD(+)</name>
        <dbReference type="ChEBI" id="CHEBI:57540"/>
    </ligand>
</feature>
<feature type="binding site" evidence="1">
    <location>
        <begin position="187"/>
        <end position="192"/>
    </location>
    <ligand>
        <name>NAD(+)</name>
        <dbReference type="ChEBI" id="CHEBI:57540"/>
    </ligand>
</feature>
<feature type="binding site" evidence="1">
    <location>
        <position position="247"/>
    </location>
    <ligand>
        <name>NAD(+)</name>
        <dbReference type="ChEBI" id="CHEBI:57540"/>
    </ligand>
</feature>
<gene>
    <name evidence="1" type="primary">nadK</name>
    <name type="ordered locus">HCH_04592</name>
</gene>
<name>NADK_HAHCH</name>
<organism>
    <name type="scientific">Hahella chejuensis (strain KCTC 2396)</name>
    <dbReference type="NCBI Taxonomy" id="349521"/>
    <lineage>
        <taxon>Bacteria</taxon>
        <taxon>Pseudomonadati</taxon>
        <taxon>Pseudomonadota</taxon>
        <taxon>Gammaproteobacteria</taxon>
        <taxon>Oceanospirillales</taxon>
        <taxon>Hahellaceae</taxon>
        <taxon>Hahella</taxon>
    </lineage>
</organism>
<comment type="function">
    <text evidence="1">Involved in the regulation of the intracellular balance of NAD and NADP, and is a key enzyme in the biosynthesis of NADP. Catalyzes specifically the phosphorylation on 2'-hydroxyl of the adenosine moiety of NAD to yield NADP.</text>
</comment>
<comment type="catalytic activity">
    <reaction evidence="1">
        <text>NAD(+) + ATP = ADP + NADP(+) + H(+)</text>
        <dbReference type="Rhea" id="RHEA:18629"/>
        <dbReference type="ChEBI" id="CHEBI:15378"/>
        <dbReference type="ChEBI" id="CHEBI:30616"/>
        <dbReference type="ChEBI" id="CHEBI:57540"/>
        <dbReference type="ChEBI" id="CHEBI:58349"/>
        <dbReference type="ChEBI" id="CHEBI:456216"/>
        <dbReference type="EC" id="2.7.1.23"/>
    </reaction>
</comment>
<comment type="cofactor">
    <cofactor evidence="1">
        <name>a divalent metal cation</name>
        <dbReference type="ChEBI" id="CHEBI:60240"/>
    </cofactor>
</comment>
<comment type="subcellular location">
    <subcellularLocation>
        <location evidence="1">Cytoplasm</location>
    </subcellularLocation>
</comment>
<comment type="similarity">
    <text evidence="1">Belongs to the NAD kinase family.</text>
</comment>
<accession>Q2SDI1</accession>
<dbReference type="EC" id="2.7.1.23" evidence="1"/>
<dbReference type="EMBL" id="CP000155">
    <property type="protein sequence ID" value="ABC31293.1"/>
    <property type="molecule type" value="Genomic_DNA"/>
</dbReference>
<dbReference type="RefSeq" id="WP_011398358.1">
    <property type="nucleotide sequence ID" value="NC_007645.1"/>
</dbReference>
<dbReference type="SMR" id="Q2SDI1"/>
<dbReference type="STRING" id="349521.HCH_04592"/>
<dbReference type="KEGG" id="hch:HCH_04592"/>
<dbReference type="eggNOG" id="COG0061">
    <property type="taxonomic scope" value="Bacteria"/>
</dbReference>
<dbReference type="HOGENOM" id="CLU_008831_0_1_6"/>
<dbReference type="OrthoDB" id="9774737at2"/>
<dbReference type="Proteomes" id="UP000000238">
    <property type="component" value="Chromosome"/>
</dbReference>
<dbReference type="GO" id="GO:0005737">
    <property type="term" value="C:cytoplasm"/>
    <property type="evidence" value="ECO:0007669"/>
    <property type="project" value="UniProtKB-SubCell"/>
</dbReference>
<dbReference type="GO" id="GO:0005524">
    <property type="term" value="F:ATP binding"/>
    <property type="evidence" value="ECO:0007669"/>
    <property type="project" value="UniProtKB-KW"/>
</dbReference>
<dbReference type="GO" id="GO:0046872">
    <property type="term" value="F:metal ion binding"/>
    <property type="evidence" value="ECO:0007669"/>
    <property type="project" value="UniProtKB-UniRule"/>
</dbReference>
<dbReference type="GO" id="GO:0051287">
    <property type="term" value="F:NAD binding"/>
    <property type="evidence" value="ECO:0007669"/>
    <property type="project" value="UniProtKB-ARBA"/>
</dbReference>
<dbReference type="GO" id="GO:0003951">
    <property type="term" value="F:NAD+ kinase activity"/>
    <property type="evidence" value="ECO:0007669"/>
    <property type="project" value="UniProtKB-UniRule"/>
</dbReference>
<dbReference type="GO" id="GO:0019674">
    <property type="term" value="P:NAD metabolic process"/>
    <property type="evidence" value="ECO:0007669"/>
    <property type="project" value="InterPro"/>
</dbReference>
<dbReference type="GO" id="GO:0006741">
    <property type="term" value="P:NADP biosynthetic process"/>
    <property type="evidence" value="ECO:0007669"/>
    <property type="project" value="UniProtKB-UniRule"/>
</dbReference>
<dbReference type="FunFam" id="2.60.200.30:FF:000009">
    <property type="entry name" value="Poly(P)/ATP NAD kinase"/>
    <property type="match status" value="1"/>
</dbReference>
<dbReference type="Gene3D" id="3.40.50.10330">
    <property type="entry name" value="Probable inorganic polyphosphate/atp-NAD kinase, domain 1"/>
    <property type="match status" value="1"/>
</dbReference>
<dbReference type="Gene3D" id="2.60.200.30">
    <property type="entry name" value="Probable inorganic polyphosphate/atp-NAD kinase, domain 2"/>
    <property type="match status" value="1"/>
</dbReference>
<dbReference type="HAMAP" id="MF_00361">
    <property type="entry name" value="NAD_kinase"/>
    <property type="match status" value="1"/>
</dbReference>
<dbReference type="InterPro" id="IPR017438">
    <property type="entry name" value="ATP-NAD_kinase_N"/>
</dbReference>
<dbReference type="InterPro" id="IPR017437">
    <property type="entry name" value="ATP-NAD_kinase_PpnK-typ_C"/>
</dbReference>
<dbReference type="InterPro" id="IPR016064">
    <property type="entry name" value="NAD/diacylglycerol_kinase_sf"/>
</dbReference>
<dbReference type="InterPro" id="IPR002504">
    <property type="entry name" value="NADK"/>
</dbReference>
<dbReference type="NCBIfam" id="NF002306">
    <property type="entry name" value="PRK01231.1"/>
    <property type="match status" value="1"/>
</dbReference>
<dbReference type="PANTHER" id="PTHR20275">
    <property type="entry name" value="NAD KINASE"/>
    <property type="match status" value="1"/>
</dbReference>
<dbReference type="PANTHER" id="PTHR20275:SF0">
    <property type="entry name" value="NAD KINASE"/>
    <property type="match status" value="1"/>
</dbReference>
<dbReference type="Pfam" id="PF01513">
    <property type="entry name" value="NAD_kinase"/>
    <property type="match status" value="1"/>
</dbReference>
<dbReference type="Pfam" id="PF20143">
    <property type="entry name" value="NAD_kinase_C"/>
    <property type="match status" value="1"/>
</dbReference>
<dbReference type="SUPFAM" id="SSF111331">
    <property type="entry name" value="NAD kinase/diacylglycerol kinase-like"/>
    <property type="match status" value="1"/>
</dbReference>
<protein>
    <recommendedName>
        <fullName evidence="1">NAD kinase</fullName>
        <ecNumber evidence="1">2.7.1.23</ecNumber>
    </recommendedName>
    <alternativeName>
        <fullName evidence="1">ATP-dependent NAD kinase</fullName>
    </alternativeName>
</protein>
<sequence>MEQFRNIGLLGRMGSVQVVETLKRLKNYLVGEGYAVILEEATAAVLPGHNVQVSSKKMLGEICDLVIVVGGDGSLLGAARALAGCNVPVLGVNRGRLGFLTDITPTEMEPQLAEVLSGKYVEESRFLLDAYVKRNGEPVGYGCGLNDIVLHPGKSTRMIGFDLYIEGQFVNSQRSDGLIVSTPTGSTAYALSAGGPIMHPRLDAIVLVPMFPHTLSSRPIVVDGNSEIKIIIGDYNQTYPHVSCDGQTHVTCAPGDTVTICKKPQKLRLIHPMNHNFYQICRDKLGWSSSRDQGGQ</sequence>
<keyword id="KW-0067">ATP-binding</keyword>
<keyword id="KW-0963">Cytoplasm</keyword>
<keyword id="KW-0418">Kinase</keyword>
<keyword id="KW-0520">NAD</keyword>
<keyword id="KW-0521">NADP</keyword>
<keyword id="KW-0547">Nucleotide-binding</keyword>
<keyword id="KW-1185">Reference proteome</keyword>
<keyword id="KW-0808">Transferase</keyword>
<proteinExistence type="inferred from homology"/>
<reference key="1">
    <citation type="journal article" date="2005" name="Nucleic Acids Res.">
        <title>Genomic blueprint of Hahella chejuensis, a marine microbe producing an algicidal agent.</title>
        <authorList>
            <person name="Jeong H."/>
            <person name="Yim J.H."/>
            <person name="Lee C."/>
            <person name="Choi S.-H."/>
            <person name="Park Y.K."/>
            <person name="Yoon S.H."/>
            <person name="Hur C.-G."/>
            <person name="Kang H.-Y."/>
            <person name="Kim D."/>
            <person name="Lee H.H."/>
            <person name="Park K.H."/>
            <person name="Park S.-H."/>
            <person name="Park H.-S."/>
            <person name="Lee H.K."/>
            <person name="Oh T.K."/>
            <person name="Kim J.F."/>
        </authorList>
    </citation>
    <scope>NUCLEOTIDE SEQUENCE [LARGE SCALE GENOMIC DNA]</scope>
    <source>
        <strain>KCTC 2396</strain>
    </source>
</reference>